<proteinExistence type="inferred from homology"/>
<keyword id="KW-0963">Cytoplasm</keyword>
<keyword id="KW-0227">DNA damage</keyword>
<keyword id="KW-0233">DNA recombination</keyword>
<keyword id="KW-0234">DNA repair</keyword>
<keyword id="KW-0238">DNA-binding</keyword>
<keyword id="KW-0255">Endonuclease</keyword>
<keyword id="KW-0378">Hydrolase</keyword>
<keyword id="KW-0460">Magnesium</keyword>
<keyword id="KW-0479">Metal-binding</keyword>
<keyword id="KW-0540">Nuclease</keyword>
<keyword id="KW-1185">Reference proteome</keyword>
<name>RUVC_LEIXX</name>
<sequence>MTIRVLGIDPGLTRCGVGVVDVRRDRRATLVEVTVIRTPAEMPLEQRLLAVGDGIAALLDRYSPAAVAIERVFAQHNLRTVIGVAQVSGVALHTAAQRGLPVALHTPSEVKAAITGYGSADKKQVQAMVARVLGLPEAPKPADAADALAIAICHAWRGGLAALSTSGAVGAAGPAAVPGAALTPAQAAWRAAERSTARTSSAPRRLAR</sequence>
<accession>Q6AFB6</accession>
<feature type="chain" id="PRO_0000183107" description="Crossover junction endodeoxyribonuclease RuvC">
    <location>
        <begin position="1"/>
        <end position="208"/>
    </location>
</feature>
<feature type="active site" evidence="1">
    <location>
        <position position="9"/>
    </location>
</feature>
<feature type="active site" evidence="1">
    <location>
        <position position="70"/>
    </location>
</feature>
<feature type="active site" evidence="1">
    <location>
        <position position="143"/>
    </location>
</feature>
<feature type="binding site" evidence="1">
    <location>
        <position position="9"/>
    </location>
    <ligand>
        <name>Mg(2+)</name>
        <dbReference type="ChEBI" id="CHEBI:18420"/>
        <label>1</label>
    </ligand>
</feature>
<feature type="binding site" evidence="1">
    <location>
        <position position="70"/>
    </location>
    <ligand>
        <name>Mg(2+)</name>
        <dbReference type="ChEBI" id="CHEBI:18420"/>
        <label>2</label>
    </ligand>
</feature>
<feature type="binding site" evidence="1">
    <location>
        <position position="143"/>
    </location>
    <ligand>
        <name>Mg(2+)</name>
        <dbReference type="ChEBI" id="CHEBI:18420"/>
        <label>1</label>
    </ligand>
</feature>
<reference key="1">
    <citation type="journal article" date="2004" name="Mol. Plant Microbe Interact.">
        <title>The genome sequence of the Gram-positive sugarcane pathogen Leifsonia xyli subsp. xyli.</title>
        <authorList>
            <person name="Monteiro-Vitorello C.B."/>
            <person name="Camargo L.E.A."/>
            <person name="Van Sluys M.A."/>
            <person name="Kitajima J.P."/>
            <person name="Truffi D."/>
            <person name="do Amaral A.M."/>
            <person name="Harakava R."/>
            <person name="de Oliveira J.C.F."/>
            <person name="Wood D."/>
            <person name="de Oliveira M.C."/>
            <person name="Miyaki C.Y."/>
            <person name="Takita M.A."/>
            <person name="da Silva A.C.R."/>
            <person name="Furlan L.R."/>
            <person name="Carraro D.M."/>
            <person name="Camarotte G."/>
            <person name="Almeida N.F. Jr."/>
            <person name="Carrer H."/>
            <person name="Coutinho L.L."/>
            <person name="El-Dorry H.A."/>
            <person name="Ferro M.I.T."/>
            <person name="Gagliardi P.R."/>
            <person name="Giglioti E."/>
            <person name="Goldman M.H.S."/>
            <person name="Goldman G.H."/>
            <person name="Kimura E.T."/>
            <person name="Ferro E.S."/>
            <person name="Kuramae E.E."/>
            <person name="Lemos E.G.M."/>
            <person name="Lemos M.V.F."/>
            <person name="Mauro S.M.Z."/>
            <person name="Machado M.A."/>
            <person name="Marino C.L."/>
            <person name="Menck C.F."/>
            <person name="Nunes L.R."/>
            <person name="Oliveira R.C."/>
            <person name="Pereira G.G."/>
            <person name="Siqueira W."/>
            <person name="de Souza A.A."/>
            <person name="Tsai S.M."/>
            <person name="Zanca A.S."/>
            <person name="Simpson A.J.G."/>
            <person name="Brumbley S.M."/>
            <person name="Setubal J.C."/>
        </authorList>
    </citation>
    <scope>NUCLEOTIDE SEQUENCE [LARGE SCALE GENOMIC DNA]</scope>
    <source>
        <strain>CTCB07</strain>
    </source>
</reference>
<comment type="function">
    <text evidence="1">The RuvA-RuvB-RuvC complex processes Holliday junction (HJ) DNA during genetic recombination and DNA repair. Endonuclease that resolves HJ intermediates. Cleaves cruciform DNA by making single-stranded nicks across the HJ at symmetrical positions within the homologous arms, yielding a 5'-phosphate and a 3'-hydroxyl group; requires a central core of homology in the junction. The consensus cleavage sequence is 5'-(A/T)TT(C/G)-3'. Cleavage occurs on the 3'-side of the TT dinucleotide at the point of strand exchange. HJ branch migration catalyzed by RuvA-RuvB allows RuvC to scan DNA until it finds its consensus sequence, where it cleaves and resolves the cruciform DNA.</text>
</comment>
<comment type="catalytic activity">
    <reaction evidence="1">
        <text>Endonucleolytic cleavage at a junction such as a reciprocal single-stranded crossover between two homologous DNA duplexes (Holliday junction).</text>
        <dbReference type="EC" id="3.1.21.10"/>
    </reaction>
</comment>
<comment type="cofactor">
    <cofactor evidence="1">
        <name>Mg(2+)</name>
        <dbReference type="ChEBI" id="CHEBI:18420"/>
    </cofactor>
    <text evidence="1">Binds 2 Mg(2+) ion per subunit.</text>
</comment>
<comment type="subunit">
    <text evidence="1">Homodimer which binds Holliday junction (HJ) DNA. The HJ becomes 2-fold symmetrical on binding to RuvC with unstacked arms; it has a different conformation from HJ DNA in complex with RuvA. In the full resolvosome a probable DNA-RuvA(4)-RuvB(12)-RuvC(2) complex forms which resolves the HJ.</text>
</comment>
<comment type="subcellular location">
    <subcellularLocation>
        <location evidence="1">Cytoplasm</location>
    </subcellularLocation>
</comment>
<comment type="similarity">
    <text evidence="1">Belongs to the RuvC family.</text>
</comment>
<dbReference type="EC" id="3.1.21.10" evidence="1"/>
<dbReference type="EMBL" id="AE016822">
    <property type="protein sequence ID" value="AAT88929.1"/>
    <property type="molecule type" value="Genomic_DNA"/>
</dbReference>
<dbReference type="SMR" id="Q6AFB6"/>
<dbReference type="STRING" id="281090.Lxx10760"/>
<dbReference type="KEGG" id="lxx:Lxx10760"/>
<dbReference type="eggNOG" id="COG0817">
    <property type="taxonomic scope" value="Bacteria"/>
</dbReference>
<dbReference type="HOGENOM" id="CLU_091257_0_2_11"/>
<dbReference type="Proteomes" id="UP000001306">
    <property type="component" value="Chromosome"/>
</dbReference>
<dbReference type="GO" id="GO:0005737">
    <property type="term" value="C:cytoplasm"/>
    <property type="evidence" value="ECO:0007669"/>
    <property type="project" value="UniProtKB-SubCell"/>
</dbReference>
<dbReference type="GO" id="GO:0048476">
    <property type="term" value="C:Holliday junction resolvase complex"/>
    <property type="evidence" value="ECO:0007669"/>
    <property type="project" value="UniProtKB-UniRule"/>
</dbReference>
<dbReference type="GO" id="GO:0008821">
    <property type="term" value="F:crossover junction DNA endonuclease activity"/>
    <property type="evidence" value="ECO:0007669"/>
    <property type="project" value="UniProtKB-UniRule"/>
</dbReference>
<dbReference type="GO" id="GO:0003677">
    <property type="term" value="F:DNA binding"/>
    <property type="evidence" value="ECO:0007669"/>
    <property type="project" value="UniProtKB-KW"/>
</dbReference>
<dbReference type="GO" id="GO:0000287">
    <property type="term" value="F:magnesium ion binding"/>
    <property type="evidence" value="ECO:0007669"/>
    <property type="project" value="UniProtKB-UniRule"/>
</dbReference>
<dbReference type="GO" id="GO:0006310">
    <property type="term" value="P:DNA recombination"/>
    <property type="evidence" value="ECO:0007669"/>
    <property type="project" value="UniProtKB-UniRule"/>
</dbReference>
<dbReference type="GO" id="GO:0006281">
    <property type="term" value="P:DNA repair"/>
    <property type="evidence" value="ECO:0007669"/>
    <property type="project" value="UniProtKB-UniRule"/>
</dbReference>
<dbReference type="CDD" id="cd16962">
    <property type="entry name" value="RuvC"/>
    <property type="match status" value="1"/>
</dbReference>
<dbReference type="FunFam" id="3.30.420.10:FF:000002">
    <property type="entry name" value="Crossover junction endodeoxyribonuclease RuvC"/>
    <property type="match status" value="1"/>
</dbReference>
<dbReference type="Gene3D" id="3.30.420.10">
    <property type="entry name" value="Ribonuclease H-like superfamily/Ribonuclease H"/>
    <property type="match status" value="1"/>
</dbReference>
<dbReference type="HAMAP" id="MF_00034">
    <property type="entry name" value="RuvC"/>
    <property type="match status" value="1"/>
</dbReference>
<dbReference type="InterPro" id="IPR012337">
    <property type="entry name" value="RNaseH-like_sf"/>
</dbReference>
<dbReference type="InterPro" id="IPR036397">
    <property type="entry name" value="RNaseH_sf"/>
</dbReference>
<dbReference type="InterPro" id="IPR020563">
    <property type="entry name" value="X-over_junc_endoDNase_Mg_BS"/>
</dbReference>
<dbReference type="InterPro" id="IPR002176">
    <property type="entry name" value="X-over_junc_endoDNase_RuvC"/>
</dbReference>
<dbReference type="NCBIfam" id="NF000711">
    <property type="entry name" value="PRK00039.2-1"/>
    <property type="match status" value="1"/>
</dbReference>
<dbReference type="NCBIfam" id="TIGR00228">
    <property type="entry name" value="ruvC"/>
    <property type="match status" value="1"/>
</dbReference>
<dbReference type="PANTHER" id="PTHR30194">
    <property type="entry name" value="CROSSOVER JUNCTION ENDODEOXYRIBONUCLEASE RUVC"/>
    <property type="match status" value="1"/>
</dbReference>
<dbReference type="PANTHER" id="PTHR30194:SF3">
    <property type="entry name" value="CROSSOVER JUNCTION ENDODEOXYRIBONUCLEASE RUVC"/>
    <property type="match status" value="1"/>
</dbReference>
<dbReference type="Pfam" id="PF02075">
    <property type="entry name" value="RuvC"/>
    <property type="match status" value="1"/>
</dbReference>
<dbReference type="PRINTS" id="PR00696">
    <property type="entry name" value="RSOLVASERUVC"/>
</dbReference>
<dbReference type="SUPFAM" id="SSF53098">
    <property type="entry name" value="Ribonuclease H-like"/>
    <property type="match status" value="1"/>
</dbReference>
<dbReference type="PROSITE" id="PS01321">
    <property type="entry name" value="RUVC"/>
    <property type="match status" value="1"/>
</dbReference>
<organism>
    <name type="scientific">Leifsonia xyli subsp. xyli (strain CTCB07)</name>
    <dbReference type="NCBI Taxonomy" id="281090"/>
    <lineage>
        <taxon>Bacteria</taxon>
        <taxon>Bacillati</taxon>
        <taxon>Actinomycetota</taxon>
        <taxon>Actinomycetes</taxon>
        <taxon>Micrococcales</taxon>
        <taxon>Microbacteriaceae</taxon>
        <taxon>Leifsonia</taxon>
    </lineage>
</organism>
<evidence type="ECO:0000255" key="1">
    <source>
        <dbReference type="HAMAP-Rule" id="MF_00034"/>
    </source>
</evidence>
<gene>
    <name evidence="1" type="primary">ruvC</name>
    <name type="ordered locus">Lxx10760</name>
</gene>
<protein>
    <recommendedName>
        <fullName evidence="1">Crossover junction endodeoxyribonuclease RuvC</fullName>
        <ecNumber evidence="1">3.1.21.10</ecNumber>
    </recommendedName>
    <alternativeName>
        <fullName evidence="1">Holliday junction nuclease RuvC</fullName>
    </alternativeName>
    <alternativeName>
        <fullName evidence="1">Holliday junction resolvase RuvC</fullName>
    </alternativeName>
</protein>